<reference key="1">
    <citation type="journal article" date="2004" name="Nature">
        <title>Genome evolution in yeasts.</title>
        <authorList>
            <person name="Dujon B."/>
            <person name="Sherman D."/>
            <person name="Fischer G."/>
            <person name="Durrens P."/>
            <person name="Casaregola S."/>
            <person name="Lafontaine I."/>
            <person name="de Montigny J."/>
            <person name="Marck C."/>
            <person name="Neuveglise C."/>
            <person name="Talla E."/>
            <person name="Goffard N."/>
            <person name="Frangeul L."/>
            <person name="Aigle M."/>
            <person name="Anthouard V."/>
            <person name="Babour A."/>
            <person name="Barbe V."/>
            <person name="Barnay S."/>
            <person name="Blanchin S."/>
            <person name="Beckerich J.-M."/>
            <person name="Beyne E."/>
            <person name="Bleykasten C."/>
            <person name="Boisrame A."/>
            <person name="Boyer J."/>
            <person name="Cattolico L."/>
            <person name="Confanioleri F."/>
            <person name="de Daruvar A."/>
            <person name="Despons L."/>
            <person name="Fabre E."/>
            <person name="Fairhead C."/>
            <person name="Ferry-Dumazet H."/>
            <person name="Groppi A."/>
            <person name="Hantraye F."/>
            <person name="Hennequin C."/>
            <person name="Jauniaux N."/>
            <person name="Joyet P."/>
            <person name="Kachouri R."/>
            <person name="Kerrest A."/>
            <person name="Koszul R."/>
            <person name="Lemaire M."/>
            <person name="Lesur I."/>
            <person name="Ma L."/>
            <person name="Muller H."/>
            <person name="Nicaud J.-M."/>
            <person name="Nikolski M."/>
            <person name="Oztas S."/>
            <person name="Ozier-Kalogeropoulos O."/>
            <person name="Pellenz S."/>
            <person name="Potier S."/>
            <person name="Richard G.-F."/>
            <person name="Straub M.-L."/>
            <person name="Suleau A."/>
            <person name="Swennen D."/>
            <person name="Tekaia F."/>
            <person name="Wesolowski-Louvel M."/>
            <person name="Westhof E."/>
            <person name="Wirth B."/>
            <person name="Zeniou-Meyer M."/>
            <person name="Zivanovic Y."/>
            <person name="Bolotin-Fukuhara M."/>
            <person name="Thierry A."/>
            <person name="Bouchier C."/>
            <person name="Caudron B."/>
            <person name="Scarpelli C."/>
            <person name="Gaillardin C."/>
            <person name="Weissenbach J."/>
            <person name="Wincker P."/>
            <person name="Souciet J.-L."/>
        </authorList>
    </citation>
    <scope>NUCLEOTIDE SEQUENCE [LARGE SCALE GENOMIC DNA]</scope>
    <source>
        <strain>CLIB 122 / E 150</strain>
    </source>
</reference>
<feature type="chain" id="PRO_0000227903" description="Adenine phosphoribosyltransferase">
    <location>
        <begin position="1"/>
        <end position="182"/>
    </location>
</feature>
<feature type="binding site" evidence="1">
    <location>
        <begin position="133"/>
        <end position="137"/>
    </location>
    <ligand>
        <name>AMP</name>
        <dbReference type="ChEBI" id="CHEBI:456215"/>
    </ligand>
</feature>
<evidence type="ECO:0000250" key="1"/>
<evidence type="ECO:0000305" key="2"/>
<organism>
    <name type="scientific">Yarrowia lipolytica (strain CLIB 122 / E 150)</name>
    <name type="common">Yeast</name>
    <name type="synonym">Candida lipolytica</name>
    <dbReference type="NCBI Taxonomy" id="284591"/>
    <lineage>
        <taxon>Eukaryota</taxon>
        <taxon>Fungi</taxon>
        <taxon>Dikarya</taxon>
        <taxon>Ascomycota</taxon>
        <taxon>Saccharomycotina</taxon>
        <taxon>Dipodascomycetes</taxon>
        <taxon>Dipodascales</taxon>
        <taxon>Dipodascales incertae sedis</taxon>
        <taxon>Yarrowia</taxon>
    </lineage>
</organism>
<accession>Q6CA53</accession>
<comment type="function">
    <text evidence="1">Catalyzes a salvage reaction resulting in the formation of AMP, that is energically less costly than de novo synthesis.</text>
</comment>
<comment type="catalytic activity">
    <reaction>
        <text>AMP + diphosphate = 5-phospho-alpha-D-ribose 1-diphosphate + adenine</text>
        <dbReference type="Rhea" id="RHEA:16609"/>
        <dbReference type="ChEBI" id="CHEBI:16708"/>
        <dbReference type="ChEBI" id="CHEBI:33019"/>
        <dbReference type="ChEBI" id="CHEBI:58017"/>
        <dbReference type="ChEBI" id="CHEBI:456215"/>
        <dbReference type="EC" id="2.4.2.7"/>
    </reaction>
</comment>
<comment type="cofactor">
    <cofactor evidence="1">
        <name>Mg(2+)</name>
        <dbReference type="ChEBI" id="CHEBI:18420"/>
    </cofactor>
</comment>
<comment type="pathway">
    <text>Purine metabolism; AMP biosynthesis via salvage pathway; AMP from adenine: step 1/1.</text>
</comment>
<comment type="subunit">
    <text evidence="1">Homodimer.</text>
</comment>
<comment type="subcellular location">
    <subcellularLocation>
        <location evidence="1">Cytoplasm</location>
    </subcellularLocation>
    <subcellularLocation>
        <location evidence="1">Nucleus</location>
    </subcellularLocation>
</comment>
<comment type="similarity">
    <text evidence="2">Belongs to the purine/pyrimidine phosphoribosyltransferase family.</text>
</comment>
<keyword id="KW-0963">Cytoplasm</keyword>
<keyword id="KW-0328">Glycosyltransferase</keyword>
<keyword id="KW-0460">Magnesium</keyword>
<keyword id="KW-0479">Metal-binding</keyword>
<keyword id="KW-0539">Nucleus</keyword>
<keyword id="KW-0660">Purine salvage</keyword>
<keyword id="KW-1185">Reference proteome</keyword>
<keyword id="KW-0808">Transferase</keyword>
<gene>
    <name type="primary">APT1</name>
    <name type="ordered locus">YALI0D05797g</name>
</gene>
<proteinExistence type="inferred from homology"/>
<protein>
    <recommendedName>
        <fullName>Adenine phosphoribosyltransferase</fullName>
        <shortName>APRT</shortName>
        <ecNumber>2.4.2.7</ecNumber>
    </recommendedName>
</protein>
<sequence>MSLQTLQTELKAKLRQYQDFPSKGIVFEDILPIFQDPKSFQQLIDAFKLHIKDTFGDKKIDVIVGLDARGFLFGPTLALAIGAAFVPVRKQGKLPGKTVHAEFQKEYGKDVFEIQEDAIKPGQTVIVVDDIIATGGSAACAGDLVTKLKGEVLEFIFILELLFLKGRDKLCAPAYTLLSGQE</sequence>
<name>APT_YARLI</name>
<dbReference type="EC" id="2.4.2.7"/>
<dbReference type="EMBL" id="CR382130">
    <property type="protein sequence ID" value="CAG80647.1"/>
    <property type="molecule type" value="Genomic_DNA"/>
</dbReference>
<dbReference type="RefSeq" id="XP_502459.1">
    <property type="nucleotide sequence ID" value="XM_502459.1"/>
</dbReference>
<dbReference type="SMR" id="Q6CA53"/>
<dbReference type="FunCoup" id="Q6CA53">
    <property type="interactions" value="593"/>
</dbReference>
<dbReference type="STRING" id="284591.Q6CA53"/>
<dbReference type="EnsemblFungi" id="CAG80647">
    <property type="protein sequence ID" value="CAG80647"/>
    <property type="gene ID" value="YALI0_D05797g"/>
</dbReference>
<dbReference type="KEGG" id="yli:2911040"/>
<dbReference type="VEuPathDB" id="FungiDB:YALI0_D05797g"/>
<dbReference type="HOGENOM" id="CLU_063339_1_0_1"/>
<dbReference type="InParanoid" id="Q6CA53"/>
<dbReference type="OMA" id="QAYDLEY"/>
<dbReference type="OrthoDB" id="88035at4891"/>
<dbReference type="UniPathway" id="UPA00588">
    <property type="reaction ID" value="UER00646"/>
</dbReference>
<dbReference type="Proteomes" id="UP000001300">
    <property type="component" value="Chromosome D"/>
</dbReference>
<dbReference type="GO" id="GO:0005737">
    <property type="term" value="C:cytoplasm"/>
    <property type="evidence" value="ECO:0000318"/>
    <property type="project" value="GO_Central"/>
</dbReference>
<dbReference type="GO" id="GO:0005634">
    <property type="term" value="C:nucleus"/>
    <property type="evidence" value="ECO:0007669"/>
    <property type="project" value="UniProtKB-SubCell"/>
</dbReference>
<dbReference type="GO" id="GO:0002055">
    <property type="term" value="F:adenine binding"/>
    <property type="evidence" value="ECO:0000318"/>
    <property type="project" value="GO_Central"/>
</dbReference>
<dbReference type="GO" id="GO:0003999">
    <property type="term" value="F:adenine phosphoribosyltransferase activity"/>
    <property type="evidence" value="ECO:0000318"/>
    <property type="project" value="GO_Central"/>
</dbReference>
<dbReference type="GO" id="GO:0016208">
    <property type="term" value="F:AMP binding"/>
    <property type="evidence" value="ECO:0000318"/>
    <property type="project" value="GO_Central"/>
</dbReference>
<dbReference type="GO" id="GO:0046872">
    <property type="term" value="F:metal ion binding"/>
    <property type="evidence" value="ECO:0007669"/>
    <property type="project" value="UniProtKB-KW"/>
</dbReference>
<dbReference type="GO" id="GO:0006168">
    <property type="term" value="P:adenine salvage"/>
    <property type="evidence" value="ECO:0000318"/>
    <property type="project" value="GO_Central"/>
</dbReference>
<dbReference type="GO" id="GO:0044209">
    <property type="term" value="P:AMP salvage"/>
    <property type="evidence" value="ECO:0000318"/>
    <property type="project" value="GO_Central"/>
</dbReference>
<dbReference type="GO" id="GO:0006166">
    <property type="term" value="P:purine ribonucleoside salvage"/>
    <property type="evidence" value="ECO:0007669"/>
    <property type="project" value="UniProtKB-KW"/>
</dbReference>
<dbReference type="CDD" id="cd06223">
    <property type="entry name" value="PRTases_typeI"/>
    <property type="match status" value="1"/>
</dbReference>
<dbReference type="FunFam" id="3.40.50.2020:FF:000004">
    <property type="entry name" value="Adenine phosphoribosyltransferase"/>
    <property type="match status" value="1"/>
</dbReference>
<dbReference type="Gene3D" id="3.40.50.2020">
    <property type="match status" value="1"/>
</dbReference>
<dbReference type="HAMAP" id="MF_00004">
    <property type="entry name" value="Aden_phosphoribosyltr"/>
    <property type="match status" value="1"/>
</dbReference>
<dbReference type="InterPro" id="IPR005764">
    <property type="entry name" value="Ade_phspho_trans"/>
</dbReference>
<dbReference type="InterPro" id="IPR000836">
    <property type="entry name" value="PRibTrfase_dom"/>
</dbReference>
<dbReference type="InterPro" id="IPR029057">
    <property type="entry name" value="PRTase-like"/>
</dbReference>
<dbReference type="InterPro" id="IPR050054">
    <property type="entry name" value="UPRTase/APRTase"/>
</dbReference>
<dbReference type="NCBIfam" id="TIGR01090">
    <property type="entry name" value="apt"/>
    <property type="match status" value="1"/>
</dbReference>
<dbReference type="NCBIfam" id="NF002634">
    <property type="entry name" value="PRK02304.1-3"/>
    <property type="match status" value="1"/>
</dbReference>
<dbReference type="NCBIfam" id="NF002636">
    <property type="entry name" value="PRK02304.1-5"/>
    <property type="match status" value="1"/>
</dbReference>
<dbReference type="PANTHER" id="PTHR32315">
    <property type="entry name" value="ADENINE PHOSPHORIBOSYLTRANSFERASE"/>
    <property type="match status" value="1"/>
</dbReference>
<dbReference type="PANTHER" id="PTHR32315:SF3">
    <property type="entry name" value="ADENINE PHOSPHORIBOSYLTRANSFERASE"/>
    <property type="match status" value="1"/>
</dbReference>
<dbReference type="Pfam" id="PF00156">
    <property type="entry name" value="Pribosyltran"/>
    <property type="match status" value="1"/>
</dbReference>
<dbReference type="SUPFAM" id="SSF53271">
    <property type="entry name" value="PRTase-like"/>
    <property type="match status" value="1"/>
</dbReference>
<dbReference type="PROSITE" id="PS00103">
    <property type="entry name" value="PUR_PYR_PR_TRANSFER"/>
    <property type="match status" value="1"/>
</dbReference>